<comment type="function">
    <text evidence="1">Functions in the biosynthesis of branched-chain amino acids. Catalyzes the dehydration of (2R,3R)-2,3-dihydroxy-3-methylpentanoate (2,3-dihydroxy-3-methylvalerate) into 2-oxo-3-methylpentanoate (2-oxo-3-methylvalerate) and of (2R)-2,3-dihydroxy-3-methylbutanoate (2,3-dihydroxyisovalerate) into 2-oxo-3-methylbutanoate (2-oxoisovalerate), the penultimate precursor to L-isoleucine and L-valine, respectively.</text>
</comment>
<comment type="catalytic activity">
    <reaction evidence="1">
        <text>(2R)-2,3-dihydroxy-3-methylbutanoate = 3-methyl-2-oxobutanoate + H2O</text>
        <dbReference type="Rhea" id="RHEA:24809"/>
        <dbReference type="ChEBI" id="CHEBI:11851"/>
        <dbReference type="ChEBI" id="CHEBI:15377"/>
        <dbReference type="ChEBI" id="CHEBI:49072"/>
        <dbReference type="EC" id="4.2.1.9"/>
    </reaction>
    <physiologicalReaction direction="left-to-right" evidence="1">
        <dbReference type="Rhea" id="RHEA:24810"/>
    </physiologicalReaction>
</comment>
<comment type="catalytic activity">
    <reaction evidence="1">
        <text>(2R,3R)-2,3-dihydroxy-3-methylpentanoate = (S)-3-methyl-2-oxopentanoate + H2O</text>
        <dbReference type="Rhea" id="RHEA:27694"/>
        <dbReference type="ChEBI" id="CHEBI:15377"/>
        <dbReference type="ChEBI" id="CHEBI:35146"/>
        <dbReference type="ChEBI" id="CHEBI:49258"/>
        <dbReference type="EC" id="4.2.1.9"/>
    </reaction>
    <physiologicalReaction direction="left-to-right" evidence="1">
        <dbReference type="Rhea" id="RHEA:27695"/>
    </physiologicalReaction>
</comment>
<comment type="cofactor">
    <cofactor evidence="1">
        <name>[2Fe-2S] cluster</name>
        <dbReference type="ChEBI" id="CHEBI:190135"/>
    </cofactor>
    <text evidence="1">Binds 1 [2Fe-2S] cluster per subunit. This cluster acts as a Lewis acid cofactor.</text>
</comment>
<comment type="cofactor">
    <cofactor evidence="1">
        <name>Mg(2+)</name>
        <dbReference type="ChEBI" id="CHEBI:18420"/>
    </cofactor>
</comment>
<comment type="pathway">
    <text evidence="1">Amino-acid biosynthesis; L-isoleucine biosynthesis; L-isoleucine from 2-oxobutanoate: step 3/4.</text>
</comment>
<comment type="pathway">
    <text evidence="1">Amino-acid biosynthesis; L-valine biosynthesis; L-valine from pyruvate: step 3/4.</text>
</comment>
<comment type="subunit">
    <text evidence="1">Homodimer.</text>
</comment>
<comment type="similarity">
    <text evidence="1">Belongs to the IlvD/Edd family.</text>
</comment>
<keyword id="KW-0001">2Fe-2S</keyword>
<keyword id="KW-0028">Amino-acid biosynthesis</keyword>
<keyword id="KW-0100">Branched-chain amino acid biosynthesis</keyword>
<keyword id="KW-0408">Iron</keyword>
<keyword id="KW-0411">Iron-sulfur</keyword>
<keyword id="KW-0456">Lyase</keyword>
<keyword id="KW-0460">Magnesium</keyword>
<keyword id="KW-0479">Metal-binding</keyword>
<name>ILVD_METS3</name>
<dbReference type="EC" id="4.2.1.9" evidence="1"/>
<dbReference type="EMBL" id="CP000678">
    <property type="protein sequence ID" value="ABQ87442.1"/>
    <property type="molecule type" value="Genomic_DNA"/>
</dbReference>
<dbReference type="RefSeq" id="WP_011954376.1">
    <property type="nucleotide sequence ID" value="NZ_CP117965.1"/>
</dbReference>
<dbReference type="SMR" id="A5UML4"/>
<dbReference type="STRING" id="420247.Msm_1237"/>
<dbReference type="EnsemblBacteria" id="ABQ87442">
    <property type="protein sequence ID" value="ABQ87442"/>
    <property type="gene ID" value="Msm_1237"/>
</dbReference>
<dbReference type="GeneID" id="78817890"/>
<dbReference type="KEGG" id="msi:Msm_1237"/>
<dbReference type="PATRIC" id="fig|420247.28.peg.1236"/>
<dbReference type="eggNOG" id="arCOG04045">
    <property type="taxonomic scope" value="Archaea"/>
</dbReference>
<dbReference type="HOGENOM" id="CLU_014271_4_2_2"/>
<dbReference type="UniPathway" id="UPA00047">
    <property type="reaction ID" value="UER00057"/>
</dbReference>
<dbReference type="UniPathway" id="UPA00049">
    <property type="reaction ID" value="UER00061"/>
</dbReference>
<dbReference type="Proteomes" id="UP000001992">
    <property type="component" value="Chromosome"/>
</dbReference>
<dbReference type="GO" id="GO:0005829">
    <property type="term" value="C:cytosol"/>
    <property type="evidence" value="ECO:0007669"/>
    <property type="project" value="TreeGrafter"/>
</dbReference>
<dbReference type="GO" id="GO:0051537">
    <property type="term" value="F:2 iron, 2 sulfur cluster binding"/>
    <property type="evidence" value="ECO:0007669"/>
    <property type="project" value="UniProtKB-UniRule"/>
</dbReference>
<dbReference type="GO" id="GO:0004160">
    <property type="term" value="F:dihydroxy-acid dehydratase activity"/>
    <property type="evidence" value="ECO:0007669"/>
    <property type="project" value="UniProtKB-UniRule"/>
</dbReference>
<dbReference type="GO" id="GO:0000287">
    <property type="term" value="F:magnesium ion binding"/>
    <property type="evidence" value="ECO:0007669"/>
    <property type="project" value="UniProtKB-UniRule"/>
</dbReference>
<dbReference type="GO" id="GO:0009097">
    <property type="term" value="P:isoleucine biosynthetic process"/>
    <property type="evidence" value="ECO:0007669"/>
    <property type="project" value="UniProtKB-UniRule"/>
</dbReference>
<dbReference type="GO" id="GO:0009099">
    <property type="term" value="P:L-valine biosynthetic process"/>
    <property type="evidence" value="ECO:0007669"/>
    <property type="project" value="UniProtKB-UniRule"/>
</dbReference>
<dbReference type="FunFam" id="3.50.30.80:FF:000001">
    <property type="entry name" value="Dihydroxy-acid dehydratase"/>
    <property type="match status" value="1"/>
</dbReference>
<dbReference type="Gene3D" id="3.50.30.80">
    <property type="entry name" value="IlvD/EDD C-terminal domain-like"/>
    <property type="match status" value="1"/>
</dbReference>
<dbReference type="HAMAP" id="MF_00012">
    <property type="entry name" value="IlvD"/>
    <property type="match status" value="1"/>
</dbReference>
<dbReference type="InterPro" id="IPR042096">
    <property type="entry name" value="Dihydro-acid_dehy_C"/>
</dbReference>
<dbReference type="InterPro" id="IPR004404">
    <property type="entry name" value="DihydroxyA_deHydtase"/>
</dbReference>
<dbReference type="InterPro" id="IPR020558">
    <property type="entry name" value="DiOHA_6PGluconate_deHydtase_CS"/>
</dbReference>
<dbReference type="InterPro" id="IPR056740">
    <property type="entry name" value="ILV_EDD_C"/>
</dbReference>
<dbReference type="InterPro" id="IPR000581">
    <property type="entry name" value="ILV_EDD_N"/>
</dbReference>
<dbReference type="InterPro" id="IPR037237">
    <property type="entry name" value="IlvD/EDD_N"/>
</dbReference>
<dbReference type="NCBIfam" id="TIGR00110">
    <property type="entry name" value="ilvD"/>
    <property type="match status" value="1"/>
</dbReference>
<dbReference type="NCBIfam" id="NF002068">
    <property type="entry name" value="PRK00911.1"/>
    <property type="match status" value="1"/>
</dbReference>
<dbReference type="PANTHER" id="PTHR43661">
    <property type="entry name" value="D-XYLONATE DEHYDRATASE"/>
    <property type="match status" value="1"/>
</dbReference>
<dbReference type="PANTHER" id="PTHR43661:SF3">
    <property type="entry name" value="D-XYLONATE DEHYDRATASE YAGF-RELATED"/>
    <property type="match status" value="1"/>
</dbReference>
<dbReference type="Pfam" id="PF24877">
    <property type="entry name" value="ILV_EDD_C"/>
    <property type="match status" value="1"/>
</dbReference>
<dbReference type="Pfam" id="PF00920">
    <property type="entry name" value="ILVD_EDD_N"/>
    <property type="match status" value="1"/>
</dbReference>
<dbReference type="SUPFAM" id="SSF143975">
    <property type="entry name" value="IlvD/EDD N-terminal domain-like"/>
    <property type="match status" value="1"/>
</dbReference>
<dbReference type="SUPFAM" id="SSF52016">
    <property type="entry name" value="LeuD/IlvD-like"/>
    <property type="match status" value="1"/>
</dbReference>
<dbReference type="PROSITE" id="PS00886">
    <property type="entry name" value="ILVD_EDD_1"/>
    <property type="match status" value="1"/>
</dbReference>
<dbReference type="PROSITE" id="PS00887">
    <property type="entry name" value="ILVD_EDD_2"/>
    <property type="match status" value="1"/>
</dbReference>
<gene>
    <name evidence="1" type="primary">ilvD</name>
    <name type="ordered locus">Msm_1237</name>
</gene>
<accession>A5UML4</accession>
<evidence type="ECO:0000255" key="1">
    <source>
        <dbReference type="HAMAP-Rule" id="MF_00012"/>
    </source>
</evidence>
<reference key="1">
    <citation type="journal article" date="2007" name="Proc. Natl. Acad. Sci. U.S.A.">
        <title>Genomic and metabolic adaptations of Methanobrevibacter smithii to the human gut.</title>
        <authorList>
            <person name="Samuel B.S."/>
            <person name="Hansen E.E."/>
            <person name="Manchester J.K."/>
            <person name="Coutinho P.M."/>
            <person name="Henrissat B."/>
            <person name="Fulton R."/>
            <person name="Latreille P."/>
            <person name="Kim K."/>
            <person name="Wilson R.K."/>
            <person name="Gordon J.I."/>
        </authorList>
    </citation>
    <scope>NUCLEOTIDE SEQUENCE [LARGE SCALE GENOMIC DNA]</scope>
    <source>
        <strain>ATCC 35061 / DSM 861 / OCM 144 / PS</strain>
    </source>
</reference>
<feature type="chain" id="PRO_1000001010" description="Dihydroxy-acid dehydratase">
    <location>
        <begin position="1"/>
        <end position="549"/>
    </location>
</feature>
<feature type="active site" description="Proton acceptor" evidence="1">
    <location>
        <position position="466"/>
    </location>
</feature>
<feature type="binding site" evidence="1">
    <location>
        <position position="78"/>
    </location>
    <ligand>
        <name>Mg(2+)</name>
        <dbReference type="ChEBI" id="CHEBI:18420"/>
    </ligand>
</feature>
<feature type="binding site" evidence="1">
    <location>
        <position position="119"/>
    </location>
    <ligand>
        <name>[2Fe-2S] cluster</name>
        <dbReference type="ChEBI" id="CHEBI:190135"/>
    </ligand>
</feature>
<feature type="binding site" evidence="1">
    <location>
        <position position="120"/>
    </location>
    <ligand>
        <name>Mg(2+)</name>
        <dbReference type="ChEBI" id="CHEBI:18420"/>
    </ligand>
</feature>
<feature type="binding site" description="via carbamate group" evidence="1">
    <location>
        <position position="121"/>
    </location>
    <ligand>
        <name>Mg(2+)</name>
        <dbReference type="ChEBI" id="CHEBI:18420"/>
    </ligand>
</feature>
<feature type="binding site" evidence="1">
    <location>
        <position position="191"/>
    </location>
    <ligand>
        <name>[2Fe-2S] cluster</name>
        <dbReference type="ChEBI" id="CHEBI:190135"/>
    </ligand>
</feature>
<feature type="binding site" evidence="1">
    <location>
        <position position="441"/>
    </location>
    <ligand>
        <name>Mg(2+)</name>
        <dbReference type="ChEBI" id="CHEBI:18420"/>
    </ligand>
</feature>
<feature type="modified residue" description="N6-carboxylysine" evidence="1">
    <location>
        <position position="121"/>
    </location>
</feature>
<proteinExistence type="inferred from homology"/>
<sequence length="549" mass="58309">MKSDNIKKGIQRAPHRSLLRACGLGDNDFDKPFIGIANSFTEIVPGHIHLRELVEFVKEGIIAAGGIPFEFNTMAICDGISMNHEGMKYSLPSREIIAATVESMAKGHSFDGLVLMPSCDKVVPGMLMGAARVDVPTIVVTGGPMAAGQYKGKNADLITVFEAVGQESAGKISEEEVYEIEKCACPGAGSCSGLFTANTMACVTETLGLSLPFCATTHAADKANEKMAYNSGKQIIKLVEADLKPSDILTQEAFNNAITVDMALGGSSNTALHIPAIANEVEDVEVTLDLFDKISRVVPHICLISPAGTDTMMDLHKAGGIPGVLKTLGDKIDTSAITVTTKTLGENIKDVEVTNTDVIHPLDNPIHKDGGIAILKGNIAPNGSVVKKGAVSPDLMHLKGPAKVFNSEEEVTQAIFDHEVEEGDILVIRYEGPKGGPGMREMLNPTSALAGMQIKNVGLITDGRFSGGTRGPCIGHVSPEAMSDGPIGAIEDGDIIEIDIENRFINVELSDEEISNRLANRKNPKRDVDGWLSIYSKVVQSADTGAILR</sequence>
<protein>
    <recommendedName>
        <fullName evidence="1">Dihydroxy-acid dehydratase</fullName>
        <shortName evidence="1">DAD</shortName>
        <ecNumber evidence="1">4.2.1.9</ecNumber>
    </recommendedName>
</protein>
<organism>
    <name type="scientific">Methanobrevibacter smithii (strain ATCC 35061 / DSM 861 / OCM 144 / PS)</name>
    <dbReference type="NCBI Taxonomy" id="420247"/>
    <lineage>
        <taxon>Archaea</taxon>
        <taxon>Methanobacteriati</taxon>
        <taxon>Methanobacteriota</taxon>
        <taxon>Methanomada group</taxon>
        <taxon>Methanobacteria</taxon>
        <taxon>Methanobacteriales</taxon>
        <taxon>Methanobacteriaceae</taxon>
        <taxon>Methanobrevibacter</taxon>
    </lineage>
</organism>